<sequence length="118" mass="13357">MARIAGVNLPAQKHVWVGLQSIYGIGRTRSKKVCEVAGVASTTKIRDLSEPEIERLRAEVGKYIVEGDLRREIGIAIKRLMDLGCYRGLRHRRGLPLRGQRTRTNARTRKGPRKAIRK</sequence>
<comment type="function">
    <text evidence="1">Located at the top of the head of the 30S subunit, it contacts several helices of the 16S rRNA. In the 70S ribosome it contacts the 23S rRNA (bridge B1a) and protein L5 of the 50S subunit (bridge B1b), connecting the 2 subunits; these bridges are implicated in subunit movement. Contacts the tRNAs in the A and P-sites.</text>
</comment>
<comment type="subunit">
    <text evidence="1">Part of the 30S ribosomal subunit. Forms a loose heterodimer with protein S19. Forms two bridges to the 50S subunit in the 70S ribosome.</text>
</comment>
<comment type="similarity">
    <text evidence="1">Belongs to the universal ribosomal protein uS13 family.</text>
</comment>
<gene>
    <name evidence="1" type="primary">rpsM</name>
    <name type="ordered locus">Smal_0777</name>
</gene>
<feature type="chain" id="PRO_1000141314" description="Small ribosomal subunit protein uS13">
    <location>
        <begin position="1"/>
        <end position="118"/>
    </location>
</feature>
<feature type="region of interest" description="Disordered" evidence="2">
    <location>
        <begin position="94"/>
        <end position="118"/>
    </location>
</feature>
<evidence type="ECO:0000255" key="1">
    <source>
        <dbReference type="HAMAP-Rule" id="MF_01315"/>
    </source>
</evidence>
<evidence type="ECO:0000256" key="2">
    <source>
        <dbReference type="SAM" id="MobiDB-lite"/>
    </source>
</evidence>
<evidence type="ECO:0000305" key="3"/>
<protein>
    <recommendedName>
        <fullName evidence="1">Small ribosomal subunit protein uS13</fullName>
    </recommendedName>
    <alternativeName>
        <fullName evidence="3">30S ribosomal protein S13</fullName>
    </alternativeName>
</protein>
<name>RS13_STRM5</name>
<dbReference type="EMBL" id="CP001111">
    <property type="protein sequence ID" value="ACF50482.1"/>
    <property type="molecule type" value="Genomic_DNA"/>
</dbReference>
<dbReference type="RefSeq" id="WP_004145437.1">
    <property type="nucleotide sequence ID" value="NC_011071.1"/>
</dbReference>
<dbReference type="SMR" id="B4SLH2"/>
<dbReference type="STRING" id="391008.Smal_0777"/>
<dbReference type="KEGG" id="smt:Smal_0777"/>
<dbReference type="eggNOG" id="COG0099">
    <property type="taxonomic scope" value="Bacteria"/>
</dbReference>
<dbReference type="HOGENOM" id="CLU_103849_1_2_6"/>
<dbReference type="OrthoDB" id="9803610at2"/>
<dbReference type="Proteomes" id="UP000001867">
    <property type="component" value="Chromosome"/>
</dbReference>
<dbReference type="GO" id="GO:0005829">
    <property type="term" value="C:cytosol"/>
    <property type="evidence" value="ECO:0007669"/>
    <property type="project" value="TreeGrafter"/>
</dbReference>
<dbReference type="GO" id="GO:0015935">
    <property type="term" value="C:small ribosomal subunit"/>
    <property type="evidence" value="ECO:0007669"/>
    <property type="project" value="TreeGrafter"/>
</dbReference>
<dbReference type="GO" id="GO:0019843">
    <property type="term" value="F:rRNA binding"/>
    <property type="evidence" value="ECO:0007669"/>
    <property type="project" value="UniProtKB-UniRule"/>
</dbReference>
<dbReference type="GO" id="GO:0003735">
    <property type="term" value="F:structural constituent of ribosome"/>
    <property type="evidence" value="ECO:0007669"/>
    <property type="project" value="InterPro"/>
</dbReference>
<dbReference type="GO" id="GO:0000049">
    <property type="term" value="F:tRNA binding"/>
    <property type="evidence" value="ECO:0007669"/>
    <property type="project" value="UniProtKB-UniRule"/>
</dbReference>
<dbReference type="GO" id="GO:0006412">
    <property type="term" value="P:translation"/>
    <property type="evidence" value="ECO:0007669"/>
    <property type="project" value="UniProtKB-UniRule"/>
</dbReference>
<dbReference type="FunFam" id="1.10.8.50:FF:000001">
    <property type="entry name" value="30S ribosomal protein S13"/>
    <property type="match status" value="1"/>
</dbReference>
<dbReference type="FunFam" id="4.10.910.10:FF:000001">
    <property type="entry name" value="30S ribosomal protein S13"/>
    <property type="match status" value="1"/>
</dbReference>
<dbReference type="Gene3D" id="1.10.8.50">
    <property type="match status" value="1"/>
</dbReference>
<dbReference type="Gene3D" id="4.10.910.10">
    <property type="entry name" value="30s ribosomal protein s13, domain 2"/>
    <property type="match status" value="1"/>
</dbReference>
<dbReference type="HAMAP" id="MF_01315">
    <property type="entry name" value="Ribosomal_uS13"/>
    <property type="match status" value="1"/>
</dbReference>
<dbReference type="InterPro" id="IPR027437">
    <property type="entry name" value="Rbsml_uS13_C"/>
</dbReference>
<dbReference type="InterPro" id="IPR001892">
    <property type="entry name" value="Ribosomal_uS13"/>
</dbReference>
<dbReference type="InterPro" id="IPR010979">
    <property type="entry name" value="Ribosomal_uS13-like_H2TH"/>
</dbReference>
<dbReference type="InterPro" id="IPR019980">
    <property type="entry name" value="Ribosomal_uS13_bac-type"/>
</dbReference>
<dbReference type="InterPro" id="IPR018269">
    <property type="entry name" value="Ribosomal_uS13_CS"/>
</dbReference>
<dbReference type="NCBIfam" id="TIGR03631">
    <property type="entry name" value="uS13_bact"/>
    <property type="match status" value="1"/>
</dbReference>
<dbReference type="PANTHER" id="PTHR10871">
    <property type="entry name" value="30S RIBOSOMAL PROTEIN S13/40S RIBOSOMAL PROTEIN S18"/>
    <property type="match status" value="1"/>
</dbReference>
<dbReference type="PANTHER" id="PTHR10871:SF1">
    <property type="entry name" value="SMALL RIBOSOMAL SUBUNIT PROTEIN US13M"/>
    <property type="match status" value="1"/>
</dbReference>
<dbReference type="Pfam" id="PF00416">
    <property type="entry name" value="Ribosomal_S13"/>
    <property type="match status" value="1"/>
</dbReference>
<dbReference type="PIRSF" id="PIRSF002134">
    <property type="entry name" value="Ribosomal_S13"/>
    <property type="match status" value="1"/>
</dbReference>
<dbReference type="SUPFAM" id="SSF46946">
    <property type="entry name" value="S13-like H2TH domain"/>
    <property type="match status" value="1"/>
</dbReference>
<dbReference type="PROSITE" id="PS00646">
    <property type="entry name" value="RIBOSOMAL_S13_1"/>
    <property type="match status" value="1"/>
</dbReference>
<dbReference type="PROSITE" id="PS50159">
    <property type="entry name" value="RIBOSOMAL_S13_2"/>
    <property type="match status" value="1"/>
</dbReference>
<proteinExistence type="inferred from homology"/>
<keyword id="KW-0687">Ribonucleoprotein</keyword>
<keyword id="KW-0689">Ribosomal protein</keyword>
<keyword id="KW-0694">RNA-binding</keyword>
<keyword id="KW-0699">rRNA-binding</keyword>
<keyword id="KW-0820">tRNA-binding</keyword>
<reference key="1">
    <citation type="submission" date="2008-06" db="EMBL/GenBank/DDBJ databases">
        <title>Complete sequence of Stenotrophomonas maltophilia R551-3.</title>
        <authorList>
            <consortium name="US DOE Joint Genome Institute"/>
            <person name="Lucas S."/>
            <person name="Copeland A."/>
            <person name="Lapidus A."/>
            <person name="Glavina del Rio T."/>
            <person name="Dalin E."/>
            <person name="Tice H."/>
            <person name="Pitluck S."/>
            <person name="Chain P."/>
            <person name="Malfatti S."/>
            <person name="Shin M."/>
            <person name="Vergez L."/>
            <person name="Lang D."/>
            <person name="Schmutz J."/>
            <person name="Larimer F."/>
            <person name="Land M."/>
            <person name="Hauser L."/>
            <person name="Kyrpides N."/>
            <person name="Mikhailova N."/>
            <person name="Taghavi S."/>
            <person name="Monchy S."/>
            <person name="Newman L."/>
            <person name="Vangronsveld J."/>
            <person name="van der Lelie D."/>
            <person name="Richardson P."/>
        </authorList>
    </citation>
    <scope>NUCLEOTIDE SEQUENCE [LARGE SCALE GENOMIC DNA]</scope>
    <source>
        <strain>R551-3</strain>
    </source>
</reference>
<organism>
    <name type="scientific">Stenotrophomonas maltophilia (strain R551-3)</name>
    <dbReference type="NCBI Taxonomy" id="391008"/>
    <lineage>
        <taxon>Bacteria</taxon>
        <taxon>Pseudomonadati</taxon>
        <taxon>Pseudomonadota</taxon>
        <taxon>Gammaproteobacteria</taxon>
        <taxon>Lysobacterales</taxon>
        <taxon>Lysobacteraceae</taxon>
        <taxon>Stenotrophomonas</taxon>
        <taxon>Stenotrophomonas maltophilia group</taxon>
    </lineage>
</organism>
<accession>B4SLH2</accession>